<evidence type="ECO:0000250" key="1"/>
<evidence type="ECO:0000255" key="2"/>
<evidence type="ECO:0000305" key="3"/>
<gene>
    <name type="primary">MLO10</name>
    <name type="ordered locus">At5g65970</name>
    <name type="ORF">K2A18.3</name>
</gene>
<sequence>MATRCFWCWTTLLFCSQLLTGFARASSAGGAKEKGLSQTPTWAVALVCTFFILVSVLLEKALHRVATWLWEKHKNSLLEALEKIKAELMILGFISLLLTFGEQYILKICIPEKAAASMLPCPAPSTHDQDKTHRRRLAAATTSSRCDEGHEPLIPATGLHQLHILLFFMAAFHILYSFITMMLGRLKIRGWKKWEQETCSHDYEFSIDPSRFRLTHETSFVRQHSSFWTKIPFFFYAGCFLQQFFRSVGRTDYLTLRHGFIAAHLAPGRKFDFQKYIKRSLEDDFKVVVGISPLLWASFVIFLLLNVNGWEALFWASILPVLIILAVSTKLQAILTRMALGITERHAVVQGIPLVHGSDKYFWFNRPQLLLHLLHFALFQNAFQLTYFFWVWYSFGLKSCFHTDFKLVIVKLSLGVGALILCSYITLPLYALVTQMGSNMKKAVFDEQMAKALKKWHMTVKKKKGKARKPPTETLGVSDTVSTSTSSFHASGATLLRSKTTGHSTASYMSNFEDQSMSDLEAEPLSPEPIEGHTLVRVGDQNTEIEYTGDISPGNQFSFVKNVPANDID</sequence>
<organism>
    <name type="scientific">Arabidopsis thaliana</name>
    <name type="common">Mouse-ear cress</name>
    <dbReference type="NCBI Taxonomy" id="3702"/>
    <lineage>
        <taxon>Eukaryota</taxon>
        <taxon>Viridiplantae</taxon>
        <taxon>Streptophyta</taxon>
        <taxon>Embryophyta</taxon>
        <taxon>Tracheophyta</taxon>
        <taxon>Spermatophyta</taxon>
        <taxon>Magnoliopsida</taxon>
        <taxon>eudicotyledons</taxon>
        <taxon>Gunneridae</taxon>
        <taxon>Pentapetalae</taxon>
        <taxon>rosids</taxon>
        <taxon>malvids</taxon>
        <taxon>Brassicales</taxon>
        <taxon>Brassicaceae</taxon>
        <taxon>Camelineae</taxon>
        <taxon>Arabidopsis</taxon>
    </lineage>
</organism>
<comment type="function">
    <text evidence="1">May be involved in modulation of pathogen defense and leaf cell death. Activity seems to be regulated by Ca(2+)-dependent calmodulin binding and seems not to require heterotrimeric G proteins (By similarity).</text>
</comment>
<comment type="subcellular location">
    <subcellularLocation>
        <location evidence="1">Membrane</location>
        <topology evidence="1">Multi-pass membrane protein</topology>
    </subcellularLocation>
</comment>
<comment type="domain">
    <text evidence="1">The C-terminus contains a calmodulin-binding domain, which binds calmodulin in a calcium-dependent fashion.</text>
</comment>
<comment type="similarity">
    <text evidence="3">Belongs to the MLO family.</text>
</comment>
<feature type="chain" id="PRO_0000209940" description="MLO-like protein 10">
    <location>
        <begin position="1"/>
        <end position="569"/>
    </location>
</feature>
<feature type="topological domain" description="Extracellular" evidence="2">
    <location>
        <begin position="1"/>
        <end position="41"/>
    </location>
</feature>
<feature type="transmembrane region" description="Helical; Name=1" evidence="2">
    <location>
        <begin position="42"/>
        <end position="62"/>
    </location>
</feature>
<feature type="topological domain" description="Cytoplasmic" evidence="2">
    <location>
        <begin position="63"/>
        <end position="85"/>
    </location>
</feature>
<feature type="transmembrane region" description="Helical; Name=2" evidence="2">
    <location>
        <begin position="86"/>
        <end position="106"/>
    </location>
</feature>
<feature type="topological domain" description="Extracellular" evidence="2">
    <location>
        <begin position="107"/>
        <end position="163"/>
    </location>
</feature>
<feature type="transmembrane region" description="Helical; Name=3" evidence="2">
    <location>
        <begin position="164"/>
        <end position="184"/>
    </location>
</feature>
<feature type="topological domain" description="Cytoplasmic" evidence="2">
    <location>
        <begin position="185"/>
        <end position="286"/>
    </location>
</feature>
<feature type="transmembrane region" description="Helical; Name=4" evidence="2">
    <location>
        <begin position="287"/>
        <end position="307"/>
    </location>
</feature>
<feature type="topological domain" description="Extracellular" evidence="2">
    <location>
        <position position="308"/>
    </location>
</feature>
<feature type="transmembrane region" description="Helical; Name=5" evidence="2">
    <location>
        <begin position="309"/>
        <end position="329"/>
    </location>
</feature>
<feature type="topological domain" description="Cytoplasmic" evidence="2">
    <location>
        <begin position="330"/>
        <end position="372"/>
    </location>
</feature>
<feature type="transmembrane region" description="Helical; Name=6" evidence="2">
    <location>
        <begin position="373"/>
        <end position="393"/>
    </location>
</feature>
<feature type="topological domain" description="Extracellular" evidence="2">
    <location>
        <begin position="394"/>
        <end position="413"/>
    </location>
</feature>
<feature type="transmembrane region" description="Helical; Name=7" evidence="2">
    <location>
        <begin position="414"/>
        <end position="434"/>
    </location>
</feature>
<feature type="topological domain" description="Cytoplasmic" evidence="2">
    <location>
        <begin position="435"/>
        <end position="569"/>
    </location>
</feature>
<feature type="region of interest" description="Calmodulin-binding">
    <location>
        <begin position="447"/>
        <end position="468"/>
    </location>
</feature>
<accession>Q9FKY5</accession>
<dbReference type="EMBL" id="AF369571">
    <property type="protein sequence ID" value="AAK53803.1"/>
    <property type="molecule type" value="mRNA"/>
</dbReference>
<dbReference type="EMBL" id="AB011474">
    <property type="protein sequence ID" value="BAB10402.1"/>
    <property type="molecule type" value="Genomic_DNA"/>
</dbReference>
<dbReference type="EMBL" id="CP002688">
    <property type="protein sequence ID" value="AED98133.1"/>
    <property type="molecule type" value="Genomic_DNA"/>
</dbReference>
<dbReference type="RefSeq" id="NP_201398.1">
    <property type="nucleotide sequence ID" value="NM_125994.2"/>
</dbReference>
<dbReference type="SMR" id="Q9FKY5"/>
<dbReference type="BioGRID" id="21969">
    <property type="interactions" value="5"/>
</dbReference>
<dbReference type="IntAct" id="Q9FKY5">
    <property type="interactions" value="1"/>
</dbReference>
<dbReference type="STRING" id="3702.Q9FKY5"/>
<dbReference type="iPTMnet" id="Q9FKY5"/>
<dbReference type="PaxDb" id="3702-AT5G65970.1"/>
<dbReference type="ProteomicsDB" id="250933"/>
<dbReference type="EnsemblPlants" id="AT5G65970.1">
    <property type="protein sequence ID" value="AT5G65970.1"/>
    <property type="gene ID" value="AT5G65970"/>
</dbReference>
<dbReference type="GeneID" id="836727"/>
<dbReference type="Gramene" id="AT5G65970.1">
    <property type="protein sequence ID" value="AT5G65970.1"/>
    <property type="gene ID" value="AT5G65970"/>
</dbReference>
<dbReference type="KEGG" id="ath:AT5G65970"/>
<dbReference type="Araport" id="AT5G65970"/>
<dbReference type="TAIR" id="AT5G65970">
    <property type="gene designation" value="MLO10"/>
</dbReference>
<dbReference type="eggNOG" id="ENOG502QPZ5">
    <property type="taxonomic scope" value="Eukaryota"/>
</dbReference>
<dbReference type="HOGENOM" id="CLU_024720_1_0_1"/>
<dbReference type="InParanoid" id="Q9FKY5"/>
<dbReference type="OMA" id="NVNGWET"/>
<dbReference type="PhylomeDB" id="Q9FKY5"/>
<dbReference type="PRO" id="PR:Q9FKY5"/>
<dbReference type="Proteomes" id="UP000006548">
    <property type="component" value="Chromosome 5"/>
</dbReference>
<dbReference type="ExpressionAtlas" id="Q9FKY5">
    <property type="expression patterns" value="baseline and differential"/>
</dbReference>
<dbReference type="GO" id="GO:0016020">
    <property type="term" value="C:membrane"/>
    <property type="evidence" value="ECO:0007669"/>
    <property type="project" value="UniProtKB-SubCell"/>
</dbReference>
<dbReference type="GO" id="GO:0005516">
    <property type="term" value="F:calmodulin binding"/>
    <property type="evidence" value="ECO:0007669"/>
    <property type="project" value="UniProtKB-KW"/>
</dbReference>
<dbReference type="GO" id="GO:0006952">
    <property type="term" value="P:defense response"/>
    <property type="evidence" value="ECO:0007669"/>
    <property type="project" value="UniProtKB-KW"/>
</dbReference>
<dbReference type="InterPro" id="IPR004326">
    <property type="entry name" value="Mlo"/>
</dbReference>
<dbReference type="PANTHER" id="PTHR31942">
    <property type="entry name" value="MLO-LIKE PROTEIN 1"/>
    <property type="match status" value="1"/>
</dbReference>
<dbReference type="PANTHER" id="PTHR31942:SF79">
    <property type="entry name" value="MLO-LIKE PROTEIN 10-RELATED"/>
    <property type="match status" value="1"/>
</dbReference>
<dbReference type="Pfam" id="PF03094">
    <property type="entry name" value="Mlo"/>
    <property type="match status" value="1"/>
</dbReference>
<name>MLO10_ARATH</name>
<proteinExistence type="evidence at transcript level"/>
<reference key="1">
    <citation type="journal article" date="2003" name="J. Mol. Evol.">
        <title>Molecular phylogeny and evolution of the plant-specific seven-transmembrane MLO family.</title>
        <authorList>
            <person name="Devoto A."/>
            <person name="Hartmann H.A."/>
            <person name="Piffanelli P."/>
            <person name="Elliott C."/>
            <person name="Simmons C."/>
            <person name="Taramino G."/>
            <person name="Goh C.-S."/>
            <person name="Cohen F.E."/>
            <person name="Emerson B.C."/>
            <person name="Schulze-Lefert P."/>
            <person name="Panstruga R."/>
        </authorList>
    </citation>
    <scope>NUCLEOTIDE SEQUENCE [MRNA]</scope>
</reference>
<reference key="2">
    <citation type="journal article" date="1998" name="DNA Res.">
        <title>Structural analysis of Arabidopsis thaliana chromosome 5. V. Sequence features of the regions of 1,381,565 bp covered by twenty one physically assigned P1 and TAC clones.</title>
        <authorList>
            <person name="Kaneko T."/>
            <person name="Kotani H."/>
            <person name="Nakamura Y."/>
            <person name="Sato S."/>
            <person name="Asamizu E."/>
            <person name="Miyajima N."/>
            <person name="Tabata S."/>
        </authorList>
    </citation>
    <scope>NUCLEOTIDE SEQUENCE [LARGE SCALE GENOMIC DNA]</scope>
    <source>
        <strain>cv. Columbia</strain>
    </source>
</reference>
<reference key="3">
    <citation type="journal article" date="2017" name="Plant J.">
        <title>Araport11: a complete reannotation of the Arabidopsis thaliana reference genome.</title>
        <authorList>
            <person name="Cheng C.Y."/>
            <person name="Krishnakumar V."/>
            <person name="Chan A.P."/>
            <person name="Thibaud-Nissen F."/>
            <person name="Schobel S."/>
            <person name="Town C.D."/>
        </authorList>
    </citation>
    <scope>GENOME REANNOTATION</scope>
    <source>
        <strain>cv. Columbia</strain>
    </source>
</reference>
<protein>
    <recommendedName>
        <fullName>MLO-like protein 10</fullName>
        <shortName>AtMlo10</shortName>
    </recommendedName>
</protein>
<keyword id="KW-0112">Calmodulin-binding</keyword>
<keyword id="KW-0472">Membrane</keyword>
<keyword id="KW-0568">Pathogenesis-related protein</keyword>
<keyword id="KW-0611">Plant defense</keyword>
<keyword id="KW-1185">Reference proteome</keyword>
<keyword id="KW-0812">Transmembrane</keyword>
<keyword id="KW-1133">Transmembrane helix</keyword>